<evidence type="ECO:0000255" key="1">
    <source>
        <dbReference type="HAMAP-Rule" id="MF_00692"/>
    </source>
</evidence>
<comment type="function">
    <text evidence="1">Nucleotidyltransferase involved in the post-translational modification of proteins. It can catalyze the addition of adenosine monophosphate (AMP) or uridine monophosphate (UMP) to a protein, resulting in modifications known as AMPylation and UMPylation.</text>
</comment>
<comment type="catalytic activity">
    <reaction evidence="1">
        <text>L-seryl-[protein] + ATP = 3-O-(5'-adenylyl)-L-seryl-[protein] + diphosphate</text>
        <dbReference type="Rhea" id="RHEA:58120"/>
        <dbReference type="Rhea" id="RHEA-COMP:9863"/>
        <dbReference type="Rhea" id="RHEA-COMP:15073"/>
        <dbReference type="ChEBI" id="CHEBI:29999"/>
        <dbReference type="ChEBI" id="CHEBI:30616"/>
        <dbReference type="ChEBI" id="CHEBI:33019"/>
        <dbReference type="ChEBI" id="CHEBI:142516"/>
        <dbReference type="EC" id="2.7.7.108"/>
    </reaction>
</comment>
<comment type="catalytic activity">
    <reaction evidence="1">
        <text>L-threonyl-[protein] + ATP = 3-O-(5'-adenylyl)-L-threonyl-[protein] + diphosphate</text>
        <dbReference type="Rhea" id="RHEA:54292"/>
        <dbReference type="Rhea" id="RHEA-COMP:11060"/>
        <dbReference type="Rhea" id="RHEA-COMP:13847"/>
        <dbReference type="ChEBI" id="CHEBI:30013"/>
        <dbReference type="ChEBI" id="CHEBI:30616"/>
        <dbReference type="ChEBI" id="CHEBI:33019"/>
        <dbReference type="ChEBI" id="CHEBI:138113"/>
        <dbReference type="EC" id="2.7.7.108"/>
    </reaction>
</comment>
<comment type="catalytic activity">
    <reaction evidence="1">
        <text>L-tyrosyl-[protein] + ATP = O-(5'-adenylyl)-L-tyrosyl-[protein] + diphosphate</text>
        <dbReference type="Rhea" id="RHEA:54288"/>
        <dbReference type="Rhea" id="RHEA-COMP:10136"/>
        <dbReference type="Rhea" id="RHEA-COMP:13846"/>
        <dbReference type="ChEBI" id="CHEBI:30616"/>
        <dbReference type="ChEBI" id="CHEBI:33019"/>
        <dbReference type="ChEBI" id="CHEBI:46858"/>
        <dbReference type="ChEBI" id="CHEBI:83624"/>
        <dbReference type="EC" id="2.7.7.108"/>
    </reaction>
</comment>
<comment type="catalytic activity">
    <reaction evidence="1">
        <text>L-histidyl-[protein] + UTP = N(tele)-(5'-uridylyl)-L-histidyl-[protein] + diphosphate</text>
        <dbReference type="Rhea" id="RHEA:83891"/>
        <dbReference type="Rhea" id="RHEA-COMP:9745"/>
        <dbReference type="Rhea" id="RHEA-COMP:20239"/>
        <dbReference type="ChEBI" id="CHEBI:29979"/>
        <dbReference type="ChEBI" id="CHEBI:33019"/>
        <dbReference type="ChEBI" id="CHEBI:46398"/>
        <dbReference type="ChEBI" id="CHEBI:233474"/>
    </reaction>
</comment>
<comment type="catalytic activity">
    <reaction evidence="1">
        <text>L-seryl-[protein] + UTP = O-(5'-uridylyl)-L-seryl-[protein] + diphosphate</text>
        <dbReference type="Rhea" id="RHEA:64604"/>
        <dbReference type="Rhea" id="RHEA-COMP:9863"/>
        <dbReference type="Rhea" id="RHEA-COMP:16635"/>
        <dbReference type="ChEBI" id="CHEBI:29999"/>
        <dbReference type="ChEBI" id="CHEBI:33019"/>
        <dbReference type="ChEBI" id="CHEBI:46398"/>
        <dbReference type="ChEBI" id="CHEBI:156051"/>
    </reaction>
</comment>
<comment type="catalytic activity">
    <reaction evidence="1">
        <text>L-tyrosyl-[protein] + UTP = O-(5'-uridylyl)-L-tyrosyl-[protein] + diphosphate</text>
        <dbReference type="Rhea" id="RHEA:83887"/>
        <dbReference type="Rhea" id="RHEA-COMP:10136"/>
        <dbReference type="Rhea" id="RHEA-COMP:20238"/>
        <dbReference type="ChEBI" id="CHEBI:33019"/>
        <dbReference type="ChEBI" id="CHEBI:46398"/>
        <dbReference type="ChEBI" id="CHEBI:46858"/>
        <dbReference type="ChEBI" id="CHEBI:90602"/>
    </reaction>
</comment>
<comment type="cofactor">
    <cofactor evidence="1">
        <name>Mg(2+)</name>
        <dbReference type="ChEBI" id="CHEBI:18420"/>
    </cofactor>
    <cofactor evidence="1">
        <name>Mn(2+)</name>
        <dbReference type="ChEBI" id="CHEBI:29035"/>
    </cofactor>
</comment>
<comment type="similarity">
    <text evidence="1">Belongs to the SELO family.</text>
</comment>
<gene>
    <name evidence="1" type="primary">ydiU</name>
    <name evidence="1" type="synonym">selO</name>
    <name type="ordered locus">SeD_A2000</name>
</gene>
<feature type="chain" id="PRO_1000132123" description="Protein nucleotidyltransferase YdiU">
    <location>
        <begin position="1"/>
        <end position="480"/>
    </location>
</feature>
<feature type="active site" description="Proton acceptor" evidence="1">
    <location>
        <position position="248"/>
    </location>
</feature>
<feature type="binding site" evidence="1">
    <location>
        <position position="86"/>
    </location>
    <ligand>
        <name>ATP</name>
        <dbReference type="ChEBI" id="CHEBI:30616"/>
    </ligand>
</feature>
<feature type="binding site" evidence="1">
    <location>
        <position position="88"/>
    </location>
    <ligand>
        <name>ATP</name>
        <dbReference type="ChEBI" id="CHEBI:30616"/>
    </ligand>
</feature>
<feature type="binding site" evidence="1">
    <location>
        <position position="89"/>
    </location>
    <ligand>
        <name>ATP</name>
        <dbReference type="ChEBI" id="CHEBI:30616"/>
    </ligand>
</feature>
<feature type="binding site" evidence="1">
    <location>
        <position position="109"/>
    </location>
    <ligand>
        <name>ATP</name>
        <dbReference type="ChEBI" id="CHEBI:30616"/>
    </ligand>
</feature>
<feature type="binding site" evidence="1">
    <location>
        <position position="121"/>
    </location>
    <ligand>
        <name>ATP</name>
        <dbReference type="ChEBI" id="CHEBI:30616"/>
    </ligand>
</feature>
<feature type="binding site" evidence="1">
    <location>
        <position position="122"/>
    </location>
    <ligand>
        <name>ATP</name>
        <dbReference type="ChEBI" id="CHEBI:30616"/>
    </ligand>
</feature>
<feature type="binding site" evidence="1">
    <location>
        <position position="172"/>
    </location>
    <ligand>
        <name>ATP</name>
        <dbReference type="ChEBI" id="CHEBI:30616"/>
    </ligand>
</feature>
<feature type="binding site" evidence="1">
    <location>
        <position position="179"/>
    </location>
    <ligand>
        <name>ATP</name>
        <dbReference type="ChEBI" id="CHEBI:30616"/>
    </ligand>
</feature>
<feature type="binding site" evidence="1">
    <location>
        <position position="249"/>
    </location>
    <ligand>
        <name>Mg(2+)</name>
        <dbReference type="ChEBI" id="CHEBI:18420"/>
    </ligand>
</feature>
<feature type="binding site" evidence="1">
    <location>
        <position position="258"/>
    </location>
    <ligand>
        <name>ATP</name>
        <dbReference type="ChEBI" id="CHEBI:30616"/>
    </ligand>
</feature>
<feature type="binding site" evidence="1">
    <location>
        <position position="258"/>
    </location>
    <ligand>
        <name>Mg(2+)</name>
        <dbReference type="ChEBI" id="CHEBI:18420"/>
    </ligand>
</feature>
<name>SELO_SALDC</name>
<reference key="1">
    <citation type="journal article" date="2011" name="J. Bacteriol.">
        <title>Comparative genomics of 28 Salmonella enterica isolates: evidence for CRISPR-mediated adaptive sublineage evolution.</title>
        <authorList>
            <person name="Fricke W.F."/>
            <person name="Mammel M.K."/>
            <person name="McDermott P.F."/>
            <person name="Tartera C."/>
            <person name="White D.G."/>
            <person name="Leclerc J.E."/>
            <person name="Ravel J."/>
            <person name="Cebula T.A."/>
        </authorList>
    </citation>
    <scope>NUCLEOTIDE SEQUENCE [LARGE SCALE GENOMIC DNA]</scope>
    <source>
        <strain>CT_02021853</strain>
    </source>
</reference>
<proteinExistence type="inferred from homology"/>
<dbReference type="EC" id="2.7.7.-" evidence="1"/>
<dbReference type="EC" id="2.7.7.108" evidence="1"/>
<dbReference type="EMBL" id="CP001144">
    <property type="protein sequence ID" value="ACH75213.1"/>
    <property type="molecule type" value="Genomic_DNA"/>
</dbReference>
<dbReference type="RefSeq" id="WP_000175677.1">
    <property type="nucleotide sequence ID" value="NC_011205.1"/>
</dbReference>
<dbReference type="SMR" id="B5FJ96"/>
<dbReference type="KEGG" id="sed:SeD_A2000"/>
<dbReference type="HOGENOM" id="CLU_010245_4_0_6"/>
<dbReference type="Proteomes" id="UP000008322">
    <property type="component" value="Chromosome"/>
</dbReference>
<dbReference type="GO" id="GO:0070733">
    <property type="term" value="F:AMPylase activity"/>
    <property type="evidence" value="ECO:0007669"/>
    <property type="project" value="TreeGrafter"/>
</dbReference>
<dbReference type="GO" id="GO:0005524">
    <property type="term" value="F:ATP binding"/>
    <property type="evidence" value="ECO:0007669"/>
    <property type="project" value="UniProtKB-UniRule"/>
</dbReference>
<dbReference type="GO" id="GO:0000287">
    <property type="term" value="F:magnesium ion binding"/>
    <property type="evidence" value="ECO:0007669"/>
    <property type="project" value="UniProtKB-UniRule"/>
</dbReference>
<dbReference type="HAMAP" id="MF_00692">
    <property type="entry name" value="YdiU_SelO"/>
    <property type="match status" value="1"/>
</dbReference>
<dbReference type="InterPro" id="IPR054838">
    <property type="entry name" value="adnlytase_SelO"/>
</dbReference>
<dbReference type="InterPro" id="IPR003846">
    <property type="entry name" value="SelO"/>
</dbReference>
<dbReference type="NCBIfam" id="NF040880">
    <property type="entry name" value="adnlytase_SelO"/>
    <property type="match status" value="1"/>
</dbReference>
<dbReference type="NCBIfam" id="NF000658">
    <property type="entry name" value="PRK00029.1"/>
    <property type="match status" value="1"/>
</dbReference>
<dbReference type="PANTHER" id="PTHR32057">
    <property type="entry name" value="PROTEIN ADENYLYLTRANSFERASE SELO, MITOCHONDRIAL"/>
    <property type="match status" value="1"/>
</dbReference>
<dbReference type="PANTHER" id="PTHR32057:SF14">
    <property type="entry name" value="PROTEIN ADENYLYLTRANSFERASE SELO, MITOCHONDRIAL"/>
    <property type="match status" value="1"/>
</dbReference>
<dbReference type="Pfam" id="PF02696">
    <property type="entry name" value="SelO"/>
    <property type="match status" value="1"/>
</dbReference>
<protein>
    <recommendedName>
        <fullName evidence="1">Protein nucleotidyltransferase YdiU</fullName>
        <ecNumber evidence="1">2.7.7.-</ecNumber>
    </recommendedName>
    <alternativeName>
        <fullName evidence="1">Protein adenylyltransferase YdiU</fullName>
        <ecNumber evidence="1">2.7.7.108</ecNumber>
    </alternativeName>
    <alternativeName>
        <fullName evidence="1">Protein uridylyltransferase YdiU</fullName>
        <ecNumber evidence="1">2.7.7.-</ecNumber>
    </alternativeName>
</protein>
<organism>
    <name type="scientific">Salmonella dublin (strain CT_02021853)</name>
    <dbReference type="NCBI Taxonomy" id="439851"/>
    <lineage>
        <taxon>Bacteria</taxon>
        <taxon>Pseudomonadati</taxon>
        <taxon>Pseudomonadota</taxon>
        <taxon>Gammaproteobacteria</taxon>
        <taxon>Enterobacterales</taxon>
        <taxon>Enterobacteriaceae</taxon>
        <taxon>Salmonella</taxon>
    </lineage>
</organism>
<sequence>MTLSFTARWRDELPATYTALLPTPLKNARLIWYNDKLAQQLAIPASLFDATNGAGVWGGETLLPGMSPVAQVYSGHQFGVWAGQLGDGRGILLGEQLLADGSTLDWHLKGAGLTPYSRMGDGRAVLRSTIRESLASEAMHYLGIPTTRALSIVASDTPVQRETQETGAMLMRLAQSHMRFGHFEHFYYRREPEKVQQLADFAIRHYWPQWQDVAEKYALWFEEVAARTGRLIAEWQTVGFAHGVMNTDNMSILGLTIDYGPFGFLDDYDPGFIGNHSDHQGRYRFDNQPSVALWNLQRLAQTLTPFIEIDALNRALDRYQDALLTHYGQRMRQKLGFFTEQKDDNALLNELFSLMAREGSDYTRTFRMLSHTEQQSASSPLRDTFIDRAAFDAWFDHYRARLRTEAVDDALRQQQMQRVNPAIVLRNWLAQRAIDAAEQGDMAELHRLHEVLRQPFTDRDDDYASRPPEWGKRLEVSCSS</sequence>
<keyword id="KW-0067">ATP-binding</keyword>
<keyword id="KW-0460">Magnesium</keyword>
<keyword id="KW-0464">Manganese</keyword>
<keyword id="KW-0479">Metal-binding</keyword>
<keyword id="KW-0547">Nucleotide-binding</keyword>
<keyword id="KW-0548">Nucleotidyltransferase</keyword>
<keyword id="KW-0808">Transferase</keyword>
<accession>B5FJ96</accession>